<proteinExistence type="inferred from homology"/>
<feature type="chain" id="PRO_0000111301" description="Small ribosomal subunit protein bS18c">
    <location>
        <begin position="1"/>
        <end position="101"/>
    </location>
</feature>
<keyword id="KW-0150">Chloroplast</keyword>
<keyword id="KW-0934">Plastid</keyword>
<keyword id="KW-0687">Ribonucleoprotein</keyword>
<keyword id="KW-0689">Ribosomal protein</keyword>
<keyword id="KW-0694">RNA-binding</keyword>
<keyword id="KW-0699">rRNA-binding</keyword>
<dbReference type="EMBL" id="AY582139">
    <property type="protein sequence ID" value="AAT98531.1"/>
    <property type="molecule type" value="Genomic_DNA"/>
</dbReference>
<dbReference type="RefSeq" id="YP_086988.1">
    <property type="nucleotide sequence ID" value="NC_006290.1"/>
</dbReference>
<dbReference type="SMR" id="Q68RY4"/>
<dbReference type="GeneID" id="3021587"/>
<dbReference type="GO" id="GO:0009507">
    <property type="term" value="C:chloroplast"/>
    <property type="evidence" value="ECO:0007669"/>
    <property type="project" value="UniProtKB-SubCell"/>
</dbReference>
<dbReference type="GO" id="GO:0005763">
    <property type="term" value="C:mitochondrial small ribosomal subunit"/>
    <property type="evidence" value="ECO:0007669"/>
    <property type="project" value="TreeGrafter"/>
</dbReference>
<dbReference type="GO" id="GO:0070181">
    <property type="term" value="F:small ribosomal subunit rRNA binding"/>
    <property type="evidence" value="ECO:0007669"/>
    <property type="project" value="TreeGrafter"/>
</dbReference>
<dbReference type="GO" id="GO:0003735">
    <property type="term" value="F:structural constituent of ribosome"/>
    <property type="evidence" value="ECO:0007669"/>
    <property type="project" value="InterPro"/>
</dbReference>
<dbReference type="GO" id="GO:0006412">
    <property type="term" value="P:translation"/>
    <property type="evidence" value="ECO:0007669"/>
    <property type="project" value="UniProtKB-UniRule"/>
</dbReference>
<dbReference type="FunFam" id="4.10.640.10:FF:000002">
    <property type="entry name" value="30S ribosomal protein S18, chloroplastic"/>
    <property type="match status" value="1"/>
</dbReference>
<dbReference type="Gene3D" id="4.10.640.10">
    <property type="entry name" value="Ribosomal protein S18"/>
    <property type="match status" value="1"/>
</dbReference>
<dbReference type="HAMAP" id="MF_00270">
    <property type="entry name" value="Ribosomal_bS18"/>
    <property type="match status" value="1"/>
</dbReference>
<dbReference type="InterPro" id="IPR001648">
    <property type="entry name" value="Ribosomal_bS18"/>
</dbReference>
<dbReference type="InterPro" id="IPR018275">
    <property type="entry name" value="Ribosomal_bS18_CS"/>
</dbReference>
<dbReference type="InterPro" id="IPR036870">
    <property type="entry name" value="Ribosomal_bS18_sf"/>
</dbReference>
<dbReference type="NCBIfam" id="TIGR00165">
    <property type="entry name" value="S18"/>
    <property type="match status" value="1"/>
</dbReference>
<dbReference type="PANTHER" id="PTHR13479">
    <property type="entry name" value="30S RIBOSOMAL PROTEIN S18"/>
    <property type="match status" value="1"/>
</dbReference>
<dbReference type="PANTHER" id="PTHR13479:SF40">
    <property type="entry name" value="SMALL RIBOSOMAL SUBUNIT PROTEIN BS18M"/>
    <property type="match status" value="1"/>
</dbReference>
<dbReference type="Pfam" id="PF01084">
    <property type="entry name" value="Ribosomal_S18"/>
    <property type="match status" value="1"/>
</dbReference>
<dbReference type="PRINTS" id="PR00974">
    <property type="entry name" value="RIBOSOMALS18"/>
</dbReference>
<dbReference type="SUPFAM" id="SSF46911">
    <property type="entry name" value="Ribosomal protein S18"/>
    <property type="match status" value="1"/>
</dbReference>
<dbReference type="PROSITE" id="PS00057">
    <property type="entry name" value="RIBOSOMAL_S18"/>
    <property type="match status" value="1"/>
</dbReference>
<organism>
    <name type="scientific">Panax ginseng</name>
    <name type="common">Korean ginseng</name>
    <dbReference type="NCBI Taxonomy" id="4054"/>
    <lineage>
        <taxon>Eukaryota</taxon>
        <taxon>Viridiplantae</taxon>
        <taxon>Streptophyta</taxon>
        <taxon>Embryophyta</taxon>
        <taxon>Tracheophyta</taxon>
        <taxon>Spermatophyta</taxon>
        <taxon>Magnoliopsida</taxon>
        <taxon>eudicotyledons</taxon>
        <taxon>Gunneridae</taxon>
        <taxon>Pentapetalae</taxon>
        <taxon>asterids</taxon>
        <taxon>campanulids</taxon>
        <taxon>Apiales</taxon>
        <taxon>Araliaceae</taxon>
        <taxon>Panax</taxon>
    </lineage>
</organism>
<evidence type="ECO:0000255" key="1">
    <source>
        <dbReference type="HAMAP-Rule" id="MF_00270"/>
    </source>
</evidence>
<evidence type="ECO:0000305" key="2"/>
<comment type="subunit">
    <text>Part of the 30S ribosomal subunit.</text>
</comment>
<comment type="subcellular location">
    <subcellularLocation>
        <location>Plastid</location>
        <location>Chloroplast</location>
    </subcellularLocation>
</comment>
<comment type="similarity">
    <text evidence="1">Belongs to the bacterial ribosomal protein bS18 family.</text>
</comment>
<accession>Q68RY4</accession>
<protein>
    <recommendedName>
        <fullName evidence="1">Small ribosomal subunit protein bS18c</fullName>
    </recommendedName>
    <alternativeName>
        <fullName evidence="2">30S ribosomal protein S18, chloroplastic</fullName>
    </alternativeName>
</protein>
<gene>
    <name evidence="1" type="primary">rps18</name>
    <name type="ORF">PSC0699</name>
</gene>
<sequence>MDKSKRPFLKSKRSFRRRLPPIQSGDRIDYRNMSLISRFISEQGKILSRRVNRLTLKQQRLITIAIKQARILSLLPFLNNDKQFERTESTARTAGLRARKK</sequence>
<reference key="1">
    <citation type="journal article" date="2004" name="DNA Res.">
        <title>Complete chloroplast genome sequence from Korea ginseng (Panax schinseng Nees) and comparative analysis of sequence evolution among 17 vascular plants.</title>
        <authorList>
            <person name="Kim K.-J."/>
            <person name="Lee H.-L."/>
        </authorList>
    </citation>
    <scope>NUCLEOTIDE SEQUENCE [LARGE SCALE GENOMIC DNA]</scope>
</reference>
<geneLocation type="chloroplast"/>
<name>RR18_PANGI</name>